<gene>
    <name evidence="1" type="primary">rsmA</name>
    <name evidence="1" type="synonym">ksgA</name>
    <name type="ordered locus">RPR_06325</name>
</gene>
<reference key="1">
    <citation type="journal article" date="2009" name="PLoS ONE">
        <title>Genome sequence of the endosymbiont Rickettsia peacockii and comparison with virulent Rickettsia rickettsii: identification of virulence factors.</title>
        <authorList>
            <person name="Felsheim R.F."/>
            <person name="Kurtti T.J."/>
            <person name="Munderloh U.G."/>
        </authorList>
    </citation>
    <scope>NUCLEOTIDE SEQUENCE [LARGE SCALE GENOMIC DNA]</scope>
    <source>
        <strain>Rustic</strain>
    </source>
</reference>
<proteinExistence type="inferred from homology"/>
<protein>
    <recommendedName>
        <fullName evidence="1">Ribosomal RNA small subunit methyltransferase A</fullName>
        <ecNumber evidence="1">2.1.1.182</ecNumber>
    </recommendedName>
    <alternativeName>
        <fullName evidence="1">16S rRNA (adenine(1518)-N(6)/adenine(1519)-N(6))-dimethyltransferase</fullName>
    </alternativeName>
    <alternativeName>
        <fullName evidence="1">16S rRNA dimethyladenosine transferase</fullName>
    </alternativeName>
    <alternativeName>
        <fullName evidence="1">16S rRNA dimethylase</fullName>
    </alternativeName>
    <alternativeName>
        <fullName evidence="1">S-adenosylmethionine-6-N', N'-adenosyl(rRNA) dimethyltransferase</fullName>
    </alternativeName>
</protein>
<organism>
    <name type="scientific">Rickettsia peacockii (strain Rustic)</name>
    <dbReference type="NCBI Taxonomy" id="562019"/>
    <lineage>
        <taxon>Bacteria</taxon>
        <taxon>Pseudomonadati</taxon>
        <taxon>Pseudomonadota</taxon>
        <taxon>Alphaproteobacteria</taxon>
        <taxon>Rickettsiales</taxon>
        <taxon>Rickettsiaceae</taxon>
        <taxon>Rickettsieae</taxon>
        <taxon>Rickettsia</taxon>
        <taxon>spotted fever group</taxon>
    </lineage>
</organism>
<sequence length="301" mass="33810">MLPSIAKHAALHQVNPLKKHGQNFIFDSSLCDKIVRASNLAENSRVLEIGPGTGGLTRSILQKNPESLTVIETDERCLPLLNEIKEYYPNLNIIKQDALKINLTDLSCDIVNSVGFAYKKREAKPITNRRANDIGESKAIDYKVTIISNLPYHIGTELVIRWLKEARLITSMTLMLQKEVVERICAIPSTKAYGRLSVICQLIAKVEKCFDVAPTAFYPPPKVYSAIVKLIPLENPLSIALINKVEQITKLAFAGRRKMIKSSLKNLVPNIHEVLTQLKINDNYRAENLAPQDYLRIAEIL</sequence>
<keyword id="KW-0963">Cytoplasm</keyword>
<keyword id="KW-0489">Methyltransferase</keyword>
<keyword id="KW-0694">RNA-binding</keyword>
<keyword id="KW-0698">rRNA processing</keyword>
<keyword id="KW-0949">S-adenosyl-L-methionine</keyword>
<keyword id="KW-0808">Transferase</keyword>
<name>RSMA_RICPU</name>
<feature type="chain" id="PRO_1000212253" description="Ribosomal RNA small subunit methyltransferase A">
    <location>
        <begin position="1"/>
        <end position="301"/>
    </location>
</feature>
<feature type="binding site" evidence="1">
    <location>
        <position position="23"/>
    </location>
    <ligand>
        <name>S-adenosyl-L-methionine</name>
        <dbReference type="ChEBI" id="CHEBI:59789"/>
    </ligand>
</feature>
<feature type="binding site" evidence="1">
    <location>
        <position position="25"/>
    </location>
    <ligand>
        <name>S-adenosyl-L-methionine</name>
        <dbReference type="ChEBI" id="CHEBI:59789"/>
    </ligand>
</feature>
<feature type="binding site" evidence="1">
    <location>
        <position position="50"/>
    </location>
    <ligand>
        <name>S-adenosyl-L-methionine</name>
        <dbReference type="ChEBI" id="CHEBI:59789"/>
    </ligand>
</feature>
<feature type="binding site" evidence="1">
    <location>
        <position position="72"/>
    </location>
    <ligand>
        <name>S-adenosyl-L-methionine</name>
        <dbReference type="ChEBI" id="CHEBI:59789"/>
    </ligand>
</feature>
<feature type="binding site" evidence="1">
    <location>
        <position position="97"/>
    </location>
    <ligand>
        <name>S-adenosyl-L-methionine</name>
        <dbReference type="ChEBI" id="CHEBI:59789"/>
    </ligand>
</feature>
<feature type="binding site" evidence="1">
    <location>
        <position position="149"/>
    </location>
    <ligand>
        <name>S-adenosyl-L-methionine</name>
        <dbReference type="ChEBI" id="CHEBI:59789"/>
    </ligand>
</feature>
<evidence type="ECO:0000255" key="1">
    <source>
        <dbReference type="HAMAP-Rule" id="MF_00607"/>
    </source>
</evidence>
<dbReference type="EC" id="2.1.1.182" evidence="1"/>
<dbReference type="EMBL" id="CP001227">
    <property type="protein sequence ID" value="ACR47792.1"/>
    <property type="molecule type" value="Genomic_DNA"/>
</dbReference>
<dbReference type="RefSeq" id="WP_012736960.1">
    <property type="nucleotide sequence ID" value="NC_012730.1"/>
</dbReference>
<dbReference type="SMR" id="C4K2J5"/>
<dbReference type="KEGG" id="rpk:RPR_06325"/>
<dbReference type="HOGENOM" id="CLU_041220_0_1_5"/>
<dbReference type="Proteomes" id="UP000005015">
    <property type="component" value="Chromosome"/>
</dbReference>
<dbReference type="GO" id="GO:0005737">
    <property type="term" value="C:cytoplasm"/>
    <property type="evidence" value="ECO:0007669"/>
    <property type="project" value="UniProtKB-SubCell"/>
</dbReference>
<dbReference type="GO" id="GO:0052908">
    <property type="term" value="F:16S rRNA (adenine(1518)-N(6)/adenine(1519)-N(6))-dimethyltransferase activity"/>
    <property type="evidence" value="ECO:0007669"/>
    <property type="project" value="UniProtKB-EC"/>
</dbReference>
<dbReference type="GO" id="GO:0003723">
    <property type="term" value="F:RNA binding"/>
    <property type="evidence" value="ECO:0007669"/>
    <property type="project" value="UniProtKB-KW"/>
</dbReference>
<dbReference type="CDD" id="cd02440">
    <property type="entry name" value="AdoMet_MTases"/>
    <property type="match status" value="1"/>
</dbReference>
<dbReference type="FunFam" id="1.10.8.100:FF:000012">
    <property type="entry name" value="Ribosomal RNA small subunit methyltransferase A"/>
    <property type="match status" value="1"/>
</dbReference>
<dbReference type="Gene3D" id="1.10.8.100">
    <property type="entry name" value="Ribosomal RNA adenine dimethylase-like, domain 2"/>
    <property type="match status" value="1"/>
</dbReference>
<dbReference type="Gene3D" id="3.40.50.150">
    <property type="entry name" value="Vaccinia Virus protein VP39"/>
    <property type="match status" value="1"/>
</dbReference>
<dbReference type="HAMAP" id="MF_00607">
    <property type="entry name" value="16SrRNA_methyltr_A"/>
    <property type="match status" value="1"/>
</dbReference>
<dbReference type="InterPro" id="IPR001737">
    <property type="entry name" value="KsgA/Erm"/>
</dbReference>
<dbReference type="InterPro" id="IPR022436">
    <property type="entry name" value="RPE2"/>
</dbReference>
<dbReference type="InterPro" id="IPR023165">
    <property type="entry name" value="rRNA_Ade_diMease-like_C"/>
</dbReference>
<dbReference type="InterPro" id="IPR020596">
    <property type="entry name" value="rRNA_Ade_Mease_Trfase_CS"/>
</dbReference>
<dbReference type="InterPro" id="IPR020598">
    <property type="entry name" value="rRNA_Ade_methylase_Trfase_N"/>
</dbReference>
<dbReference type="InterPro" id="IPR011530">
    <property type="entry name" value="rRNA_adenine_dimethylase"/>
</dbReference>
<dbReference type="InterPro" id="IPR029063">
    <property type="entry name" value="SAM-dependent_MTases_sf"/>
</dbReference>
<dbReference type="NCBIfam" id="TIGR00755">
    <property type="entry name" value="ksgA"/>
    <property type="match status" value="1"/>
</dbReference>
<dbReference type="NCBIfam" id="TIGR03774">
    <property type="entry name" value="RPE2"/>
    <property type="match status" value="1"/>
</dbReference>
<dbReference type="PANTHER" id="PTHR11727">
    <property type="entry name" value="DIMETHYLADENOSINE TRANSFERASE"/>
    <property type="match status" value="1"/>
</dbReference>
<dbReference type="PANTHER" id="PTHR11727:SF7">
    <property type="entry name" value="DIMETHYLADENOSINE TRANSFERASE-RELATED"/>
    <property type="match status" value="1"/>
</dbReference>
<dbReference type="Pfam" id="PF00398">
    <property type="entry name" value="RrnaAD"/>
    <property type="match status" value="1"/>
</dbReference>
<dbReference type="SMART" id="SM00650">
    <property type="entry name" value="rADc"/>
    <property type="match status" value="1"/>
</dbReference>
<dbReference type="SUPFAM" id="SSF53335">
    <property type="entry name" value="S-adenosyl-L-methionine-dependent methyltransferases"/>
    <property type="match status" value="1"/>
</dbReference>
<dbReference type="PROSITE" id="PS01131">
    <property type="entry name" value="RRNA_A_DIMETH"/>
    <property type="match status" value="1"/>
</dbReference>
<dbReference type="PROSITE" id="PS51689">
    <property type="entry name" value="SAM_RNA_A_N6_MT"/>
    <property type="match status" value="1"/>
</dbReference>
<accession>C4K2J5</accession>
<comment type="function">
    <text evidence="1">Specifically dimethylates two adjacent adenosines (A1518 and A1519) in the loop of a conserved hairpin near the 3'-end of 16S rRNA in the 30S particle. May play a critical role in biogenesis of 30S subunits.</text>
</comment>
<comment type="catalytic activity">
    <reaction evidence="1">
        <text>adenosine(1518)/adenosine(1519) in 16S rRNA + 4 S-adenosyl-L-methionine = N(6)-dimethyladenosine(1518)/N(6)-dimethyladenosine(1519) in 16S rRNA + 4 S-adenosyl-L-homocysteine + 4 H(+)</text>
        <dbReference type="Rhea" id="RHEA:19609"/>
        <dbReference type="Rhea" id="RHEA-COMP:10232"/>
        <dbReference type="Rhea" id="RHEA-COMP:10233"/>
        <dbReference type="ChEBI" id="CHEBI:15378"/>
        <dbReference type="ChEBI" id="CHEBI:57856"/>
        <dbReference type="ChEBI" id="CHEBI:59789"/>
        <dbReference type="ChEBI" id="CHEBI:74411"/>
        <dbReference type="ChEBI" id="CHEBI:74493"/>
        <dbReference type="EC" id="2.1.1.182"/>
    </reaction>
</comment>
<comment type="subcellular location">
    <subcellularLocation>
        <location evidence="1">Cytoplasm</location>
    </subcellularLocation>
</comment>
<comment type="similarity">
    <text evidence="1">Belongs to the class I-like SAM-binding methyltransferase superfamily. rRNA adenine N(6)-methyltransferase family. RsmA subfamily.</text>
</comment>